<organism>
    <name type="scientific">Myxococcus xanthus (strain DK1622)</name>
    <dbReference type="NCBI Taxonomy" id="246197"/>
    <lineage>
        <taxon>Bacteria</taxon>
        <taxon>Pseudomonadati</taxon>
        <taxon>Myxococcota</taxon>
        <taxon>Myxococcia</taxon>
        <taxon>Myxococcales</taxon>
        <taxon>Cystobacterineae</taxon>
        <taxon>Myxococcaceae</taxon>
        <taxon>Myxococcus</taxon>
    </lineage>
</organism>
<accession>Q1D936</accession>
<sequence length="436" mass="46980">MPNVVVIGAQWGDEGKGKVVDLLTEHAQVVVRFQGGNNAGHTLVVGGQKTVLHLIPSGILHPGKTCVIGNGVVVDPAVLVGEIDALKVRGFLKDDAQLLISDNAHVIFPWHKLLDSFREKARGGSAIGTTGRGIGPAYEDKVARRGIRVRDLLNADRLRTRIEARLPAALDELKDLCAQAGDPVPQLEVPQILAEFTGLGERLKPFVHDASLYLSGQVRRGARILFEGAQGTLLDVDHGTYPFVTSSNCVAGNAAVGSGLGPTAIDKVMGISKAYTTRVGGGPFPTELHDAIGDQLRKMGDEFGTTTGRPRRCGWLDGVVLRYASRVNGLWGMALTKLDVLSGLKTLQICTAYELDGQKVMELPGDYEDLARVKPIYETLQGWDEQIAGVRTFDELPENAKRYVRRVEEVSGVPVVCVSVGADRGETVLLQNPFRS</sequence>
<dbReference type="EC" id="6.3.4.4" evidence="1"/>
<dbReference type="EMBL" id="CP000113">
    <property type="protein sequence ID" value="ABF87700.1"/>
    <property type="molecule type" value="Genomic_DNA"/>
</dbReference>
<dbReference type="RefSeq" id="WP_011552688.1">
    <property type="nucleotide sequence ID" value="NC_008095.1"/>
</dbReference>
<dbReference type="SMR" id="Q1D936"/>
<dbReference type="STRING" id="246197.MXAN_2618"/>
<dbReference type="EnsemblBacteria" id="ABF87700">
    <property type="protein sequence ID" value="ABF87700"/>
    <property type="gene ID" value="MXAN_2618"/>
</dbReference>
<dbReference type="GeneID" id="41359995"/>
<dbReference type="KEGG" id="mxa:MXAN_2618"/>
<dbReference type="eggNOG" id="COG0104">
    <property type="taxonomic scope" value="Bacteria"/>
</dbReference>
<dbReference type="HOGENOM" id="CLU_029848_0_0_7"/>
<dbReference type="OrthoDB" id="9807553at2"/>
<dbReference type="UniPathway" id="UPA00075">
    <property type="reaction ID" value="UER00335"/>
</dbReference>
<dbReference type="Proteomes" id="UP000002402">
    <property type="component" value="Chromosome"/>
</dbReference>
<dbReference type="GO" id="GO:0005737">
    <property type="term" value="C:cytoplasm"/>
    <property type="evidence" value="ECO:0007669"/>
    <property type="project" value="UniProtKB-SubCell"/>
</dbReference>
<dbReference type="GO" id="GO:0004019">
    <property type="term" value="F:adenylosuccinate synthase activity"/>
    <property type="evidence" value="ECO:0007669"/>
    <property type="project" value="UniProtKB-UniRule"/>
</dbReference>
<dbReference type="GO" id="GO:0005525">
    <property type="term" value="F:GTP binding"/>
    <property type="evidence" value="ECO:0007669"/>
    <property type="project" value="UniProtKB-UniRule"/>
</dbReference>
<dbReference type="GO" id="GO:0000287">
    <property type="term" value="F:magnesium ion binding"/>
    <property type="evidence" value="ECO:0007669"/>
    <property type="project" value="UniProtKB-UniRule"/>
</dbReference>
<dbReference type="GO" id="GO:0044208">
    <property type="term" value="P:'de novo' AMP biosynthetic process"/>
    <property type="evidence" value="ECO:0007669"/>
    <property type="project" value="UniProtKB-UniRule"/>
</dbReference>
<dbReference type="GO" id="GO:0046040">
    <property type="term" value="P:IMP metabolic process"/>
    <property type="evidence" value="ECO:0007669"/>
    <property type="project" value="TreeGrafter"/>
</dbReference>
<dbReference type="CDD" id="cd03108">
    <property type="entry name" value="AdSS"/>
    <property type="match status" value="1"/>
</dbReference>
<dbReference type="FunFam" id="1.10.300.10:FF:000001">
    <property type="entry name" value="Adenylosuccinate synthetase"/>
    <property type="match status" value="1"/>
</dbReference>
<dbReference type="FunFam" id="3.90.170.10:FF:000001">
    <property type="entry name" value="Adenylosuccinate synthetase"/>
    <property type="match status" value="1"/>
</dbReference>
<dbReference type="Gene3D" id="3.40.440.10">
    <property type="entry name" value="Adenylosuccinate Synthetase, subunit A, domain 1"/>
    <property type="match status" value="1"/>
</dbReference>
<dbReference type="Gene3D" id="1.10.300.10">
    <property type="entry name" value="Adenylosuccinate Synthetase, subunit A, domain 2"/>
    <property type="match status" value="1"/>
</dbReference>
<dbReference type="Gene3D" id="3.90.170.10">
    <property type="entry name" value="Adenylosuccinate Synthetase, subunit A, domain 3"/>
    <property type="match status" value="1"/>
</dbReference>
<dbReference type="HAMAP" id="MF_00011">
    <property type="entry name" value="Adenylosucc_synth"/>
    <property type="match status" value="1"/>
</dbReference>
<dbReference type="InterPro" id="IPR018220">
    <property type="entry name" value="Adenylosuccin_syn_GTP-bd"/>
</dbReference>
<dbReference type="InterPro" id="IPR033128">
    <property type="entry name" value="Adenylosuccin_syn_Lys_AS"/>
</dbReference>
<dbReference type="InterPro" id="IPR042109">
    <property type="entry name" value="Adenylosuccinate_synth_dom1"/>
</dbReference>
<dbReference type="InterPro" id="IPR042110">
    <property type="entry name" value="Adenylosuccinate_synth_dom2"/>
</dbReference>
<dbReference type="InterPro" id="IPR042111">
    <property type="entry name" value="Adenylosuccinate_synth_dom3"/>
</dbReference>
<dbReference type="InterPro" id="IPR001114">
    <property type="entry name" value="Adenylosuccinate_synthetase"/>
</dbReference>
<dbReference type="InterPro" id="IPR027417">
    <property type="entry name" value="P-loop_NTPase"/>
</dbReference>
<dbReference type="NCBIfam" id="NF002223">
    <property type="entry name" value="PRK01117.1"/>
    <property type="match status" value="1"/>
</dbReference>
<dbReference type="NCBIfam" id="TIGR00184">
    <property type="entry name" value="purA"/>
    <property type="match status" value="1"/>
</dbReference>
<dbReference type="PANTHER" id="PTHR11846">
    <property type="entry name" value="ADENYLOSUCCINATE SYNTHETASE"/>
    <property type="match status" value="1"/>
</dbReference>
<dbReference type="PANTHER" id="PTHR11846:SF0">
    <property type="entry name" value="ADENYLOSUCCINATE SYNTHETASE"/>
    <property type="match status" value="1"/>
</dbReference>
<dbReference type="Pfam" id="PF00709">
    <property type="entry name" value="Adenylsucc_synt"/>
    <property type="match status" value="1"/>
</dbReference>
<dbReference type="SMART" id="SM00788">
    <property type="entry name" value="Adenylsucc_synt"/>
    <property type="match status" value="1"/>
</dbReference>
<dbReference type="SUPFAM" id="SSF52540">
    <property type="entry name" value="P-loop containing nucleoside triphosphate hydrolases"/>
    <property type="match status" value="1"/>
</dbReference>
<dbReference type="PROSITE" id="PS01266">
    <property type="entry name" value="ADENYLOSUCCIN_SYN_1"/>
    <property type="match status" value="1"/>
</dbReference>
<dbReference type="PROSITE" id="PS00513">
    <property type="entry name" value="ADENYLOSUCCIN_SYN_2"/>
    <property type="match status" value="1"/>
</dbReference>
<name>PURA_MYXXD</name>
<proteinExistence type="inferred from homology"/>
<feature type="chain" id="PRO_1000000875" description="Adenylosuccinate synthetase">
    <location>
        <begin position="1"/>
        <end position="436"/>
    </location>
</feature>
<feature type="active site" description="Proton acceptor" evidence="1">
    <location>
        <position position="13"/>
    </location>
</feature>
<feature type="active site" description="Proton donor" evidence="1">
    <location>
        <position position="41"/>
    </location>
</feature>
<feature type="binding site" evidence="1">
    <location>
        <begin position="12"/>
        <end position="18"/>
    </location>
    <ligand>
        <name>GTP</name>
        <dbReference type="ChEBI" id="CHEBI:37565"/>
    </ligand>
</feature>
<feature type="binding site" description="in other chain" evidence="1">
    <location>
        <begin position="13"/>
        <end position="16"/>
    </location>
    <ligand>
        <name>IMP</name>
        <dbReference type="ChEBI" id="CHEBI:58053"/>
        <note>ligand shared between dimeric partners</note>
    </ligand>
</feature>
<feature type="binding site" evidence="1">
    <location>
        <position position="13"/>
    </location>
    <ligand>
        <name>Mg(2+)</name>
        <dbReference type="ChEBI" id="CHEBI:18420"/>
    </ligand>
</feature>
<feature type="binding site" description="in other chain" evidence="1">
    <location>
        <begin position="38"/>
        <end position="41"/>
    </location>
    <ligand>
        <name>IMP</name>
        <dbReference type="ChEBI" id="CHEBI:58053"/>
        <note>ligand shared between dimeric partners</note>
    </ligand>
</feature>
<feature type="binding site" evidence="1">
    <location>
        <begin position="40"/>
        <end position="42"/>
    </location>
    <ligand>
        <name>GTP</name>
        <dbReference type="ChEBI" id="CHEBI:37565"/>
    </ligand>
</feature>
<feature type="binding site" evidence="1">
    <location>
        <position position="40"/>
    </location>
    <ligand>
        <name>Mg(2+)</name>
        <dbReference type="ChEBI" id="CHEBI:18420"/>
    </ligand>
</feature>
<feature type="binding site" description="in other chain" evidence="1">
    <location>
        <position position="130"/>
    </location>
    <ligand>
        <name>IMP</name>
        <dbReference type="ChEBI" id="CHEBI:58053"/>
        <note>ligand shared between dimeric partners</note>
    </ligand>
</feature>
<feature type="binding site" evidence="1">
    <location>
        <position position="144"/>
    </location>
    <ligand>
        <name>IMP</name>
        <dbReference type="ChEBI" id="CHEBI:58053"/>
        <note>ligand shared between dimeric partners</note>
    </ligand>
</feature>
<feature type="binding site" description="in other chain" evidence="1">
    <location>
        <position position="230"/>
    </location>
    <ligand>
        <name>IMP</name>
        <dbReference type="ChEBI" id="CHEBI:58053"/>
        <note>ligand shared between dimeric partners</note>
    </ligand>
</feature>
<feature type="binding site" description="in other chain" evidence="1">
    <location>
        <position position="245"/>
    </location>
    <ligand>
        <name>IMP</name>
        <dbReference type="ChEBI" id="CHEBI:58053"/>
        <note>ligand shared between dimeric partners</note>
    </ligand>
</feature>
<feature type="binding site" evidence="1">
    <location>
        <begin position="305"/>
        <end position="311"/>
    </location>
    <ligand>
        <name>substrate</name>
    </ligand>
</feature>
<feature type="binding site" description="in other chain" evidence="1">
    <location>
        <position position="309"/>
    </location>
    <ligand>
        <name>IMP</name>
        <dbReference type="ChEBI" id="CHEBI:58053"/>
        <note>ligand shared between dimeric partners</note>
    </ligand>
</feature>
<feature type="binding site" evidence="1">
    <location>
        <position position="311"/>
    </location>
    <ligand>
        <name>GTP</name>
        <dbReference type="ChEBI" id="CHEBI:37565"/>
    </ligand>
</feature>
<feature type="binding site" evidence="1">
    <location>
        <begin position="337"/>
        <end position="339"/>
    </location>
    <ligand>
        <name>GTP</name>
        <dbReference type="ChEBI" id="CHEBI:37565"/>
    </ligand>
</feature>
<feature type="binding site" evidence="1">
    <location>
        <begin position="419"/>
        <end position="421"/>
    </location>
    <ligand>
        <name>GTP</name>
        <dbReference type="ChEBI" id="CHEBI:37565"/>
    </ligand>
</feature>
<comment type="function">
    <text evidence="1">Plays an important role in the de novo pathway of purine nucleotide biosynthesis. Catalyzes the first committed step in the biosynthesis of AMP from IMP.</text>
</comment>
<comment type="catalytic activity">
    <reaction evidence="1">
        <text>IMP + L-aspartate + GTP = N(6)-(1,2-dicarboxyethyl)-AMP + GDP + phosphate + 2 H(+)</text>
        <dbReference type="Rhea" id="RHEA:15753"/>
        <dbReference type="ChEBI" id="CHEBI:15378"/>
        <dbReference type="ChEBI" id="CHEBI:29991"/>
        <dbReference type="ChEBI" id="CHEBI:37565"/>
        <dbReference type="ChEBI" id="CHEBI:43474"/>
        <dbReference type="ChEBI" id="CHEBI:57567"/>
        <dbReference type="ChEBI" id="CHEBI:58053"/>
        <dbReference type="ChEBI" id="CHEBI:58189"/>
        <dbReference type="EC" id="6.3.4.4"/>
    </reaction>
</comment>
<comment type="cofactor">
    <cofactor evidence="1">
        <name>Mg(2+)</name>
        <dbReference type="ChEBI" id="CHEBI:18420"/>
    </cofactor>
    <text evidence="1">Binds 1 Mg(2+) ion per subunit.</text>
</comment>
<comment type="pathway">
    <text evidence="1">Purine metabolism; AMP biosynthesis via de novo pathway; AMP from IMP: step 1/2.</text>
</comment>
<comment type="subunit">
    <text evidence="1">Homodimer.</text>
</comment>
<comment type="subcellular location">
    <subcellularLocation>
        <location evidence="1">Cytoplasm</location>
    </subcellularLocation>
</comment>
<comment type="similarity">
    <text evidence="1">Belongs to the adenylosuccinate synthetase family.</text>
</comment>
<reference key="1">
    <citation type="journal article" date="2006" name="Proc. Natl. Acad. Sci. U.S.A.">
        <title>Evolution of sensory complexity recorded in a myxobacterial genome.</title>
        <authorList>
            <person name="Goldman B.S."/>
            <person name="Nierman W.C."/>
            <person name="Kaiser D."/>
            <person name="Slater S.C."/>
            <person name="Durkin A.S."/>
            <person name="Eisen J.A."/>
            <person name="Ronning C.M."/>
            <person name="Barbazuk W.B."/>
            <person name="Blanchard M."/>
            <person name="Field C."/>
            <person name="Halling C."/>
            <person name="Hinkle G."/>
            <person name="Iartchuk O."/>
            <person name="Kim H.S."/>
            <person name="Mackenzie C."/>
            <person name="Madupu R."/>
            <person name="Miller N."/>
            <person name="Shvartsbeyn A."/>
            <person name="Sullivan S.A."/>
            <person name="Vaudin M."/>
            <person name="Wiegand R."/>
            <person name="Kaplan H.B."/>
        </authorList>
    </citation>
    <scope>NUCLEOTIDE SEQUENCE [LARGE SCALE GENOMIC DNA]</scope>
    <source>
        <strain>DK1622</strain>
    </source>
</reference>
<evidence type="ECO:0000255" key="1">
    <source>
        <dbReference type="HAMAP-Rule" id="MF_00011"/>
    </source>
</evidence>
<keyword id="KW-0963">Cytoplasm</keyword>
<keyword id="KW-0342">GTP-binding</keyword>
<keyword id="KW-0436">Ligase</keyword>
<keyword id="KW-0460">Magnesium</keyword>
<keyword id="KW-0479">Metal-binding</keyword>
<keyword id="KW-0547">Nucleotide-binding</keyword>
<keyword id="KW-0658">Purine biosynthesis</keyword>
<keyword id="KW-1185">Reference proteome</keyword>
<gene>
    <name evidence="1" type="primary">purA</name>
    <name type="ordered locus">MXAN_2618</name>
</gene>
<protein>
    <recommendedName>
        <fullName evidence="1">Adenylosuccinate synthetase</fullName>
        <shortName evidence="1">AMPSase</shortName>
        <shortName evidence="1">AdSS</shortName>
        <ecNumber evidence="1">6.3.4.4</ecNumber>
    </recommendedName>
    <alternativeName>
        <fullName evidence="1">IMP--aspartate ligase</fullName>
    </alternativeName>
</protein>